<gene>
    <name evidence="1" type="primary">kdpC</name>
    <name type="ordered locus">BT_2423</name>
</gene>
<feature type="chain" id="PRO_0000196985" description="Potassium-transporting ATPase KdpC subunit">
    <location>
        <begin position="1"/>
        <end position="189"/>
    </location>
</feature>
<feature type="transmembrane region" description="Helical" evidence="1">
    <location>
        <begin position="10"/>
        <end position="30"/>
    </location>
</feature>
<accession>Q8A521</accession>
<reference key="1">
    <citation type="journal article" date="2003" name="Science">
        <title>A genomic view of the human-Bacteroides thetaiotaomicron symbiosis.</title>
        <authorList>
            <person name="Xu J."/>
            <person name="Bjursell M.K."/>
            <person name="Himrod J."/>
            <person name="Deng S."/>
            <person name="Carmichael L.K."/>
            <person name="Chiang H.C."/>
            <person name="Hooper L.V."/>
            <person name="Gordon J.I."/>
        </authorList>
    </citation>
    <scope>NUCLEOTIDE SEQUENCE [LARGE SCALE GENOMIC DNA]</scope>
    <source>
        <strain>ATCC 29148 / DSM 2079 / JCM 5827 / CCUG 10774 / NCTC 10582 / VPI-5482 / E50</strain>
    </source>
</reference>
<name>KDPC_BACTN</name>
<dbReference type="EMBL" id="AE015928">
    <property type="protein sequence ID" value="AAO77530.1"/>
    <property type="molecule type" value="Genomic_DNA"/>
</dbReference>
<dbReference type="RefSeq" id="NP_811336.1">
    <property type="nucleotide sequence ID" value="NC_004663.1"/>
</dbReference>
<dbReference type="RefSeq" id="WP_008764090.1">
    <property type="nucleotide sequence ID" value="NC_004663.1"/>
</dbReference>
<dbReference type="SMR" id="Q8A521"/>
<dbReference type="FunCoup" id="Q8A521">
    <property type="interactions" value="187"/>
</dbReference>
<dbReference type="STRING" id="226186.BT_2423"/>
<dbReference type="PaxDb" id="226186-BT_2423"/>
<dbReference type="EnsemblBacteria" id="AAO77530">
    <property type="protein sequence ID" value="AAO77530"/>
    <property type="gene ID" value="BT_2423"/>
</dbReference>
<dbReference type="GeneID" id="60923594"/>
<dbReference type="KEGG" id="bth:BT_2423"/>
<dbReference type="PATRIC" id="fig|226186.12.peg.2485"/>
<dbReference type="eggNOG" id="COG2156">
    <property type="taxonomic scope" value="Bacteria"/>
</dbReference>
<dbReference type="HOGENOM" id="CLU_077094_2_0_10"/>
<dbReference type="InParanoid" id="Q8A521"/>
<dbReference type="OrthoDB" id="9809491at2"/>
<dbReference type="Proteomes" id="UP000001414">
    <property type="component" value="Chromosome"/>
</dbReference>
<dbReference type="GO" id="GO:0005886">
    <property type="term" value="C:plasma membrane"/>
    <property type="evidence" value="ECO:0007669"/>
    <property type="project" value="UniProtKB-SubCell"/>
</dbReference>
<dbReference type="GO" id="GO:0005524">
    <property type="term" value="F:ATP binding"/>
    <property type="evidence" value="ECO:0007669"/>
    <property type="project" value="UniProtKB-UniRule"/>
</dbReference>
<dbReference type="GO" id="GO:0008556">
    <property type="term" value="F:P-type potassium transmembrane transporter activity"/>
    <property type="evidence" value="ECO:0000318"/>
    <property type="project" value="GO_Central"/>
</dbReference>
<dbReference type="GO" id="GO:0071805">
    <property type="term" value="P:potassium ion transmembrane transport"/>
    <property type="evidence" value="ECO:0000318"/>
    <property type="project" value="GO_Central"/>
</dbReference>
<dbReference type="HAMAP" id="MF_00276">
    <property type="entry name" value="KdpC"/>
    <property type="match status" value="1"/>
</dbReference>
<dbReference type="InterPro" id="IPR003820">
    <property type="entry name" value="KdpC"/>
</dbReference>
<dbReference type="NCBIfam" id="TIGR00681">
    <property type="entry name" value="kdpC"/>
    <property type="match status" value="1"/>
</dbReference>
<dbReference type="NCBIfam" id="NF001454">
    <property type="entry name" value="PRK00315.1"/>
    <property type="match status" value="1"/>
</dbReference>
<dbReference type="NCBIfam" id="NF010606">
    <property type="entry name" value="PRK14002.1"/>
    <property type="match status" value="1"/>
</dbReference>
<dbReference type="PANTHER" id="PTHR30042">
    <property type="entry name" value="POTASSIUM-TRANSPORTING ATPASE C CHAIN"/>
    <property type="match status" value="1"/>
</dbReference>
<dbReference type="PANTHER" id="PTHR30042:SF2">
    <property type="entry name" value="POTASSIUM-TRANSPORTING ATPASE KDPC SUBUNIT"/>
    <property type="match status" value="1"/>
</dbReference>
<dbReference type="Pfam" id="PF02669">
    <property type="entry name" value="KdpC"/>
    <property type="match status" value="1"/>
</dbReference>
<dbReference type="PIRSF" id="PIRSF001296">
    <property type="entry name" value="K_ATPase_KdpC"/>
    <property type="match status" value="1"/>
</dbReference>
<proteinExistence type="inferred from homology"/>
<evidence type="ECO:0000255" key="1">
    <source>
        <dbReference type="HAMAP-Rule" id="MF_00276"/>
    </source>
</evidence>
<keyword id="KW-0067">ATP-binding</keyword>
<keyword id="KW-0997">Cell inner membrane</keyword>
<keyword id="KW-1003">Cell membrane</keyword>
<keyword id="KW-0406">Ion transport</keyword>
<keyword id="KW-0472">Membrane</keyword>
<keyword id="KW-0547">Nucleotide-binding</keyword>
<keyword id="KW-0630">Potassium</keyword>
<keyword id="KW-0633">Potassium transport</keyword>
<keyword id="KW-1185">Reference proteome</keyword>
<keyword id="KW-0812">Transmembrane</keyword>
<keyword id="KW-1133">Transmembrane helix</keyword>
<keyword id="KW-0813">Transport</keyword>
<protein>
    <recommendedName>
        <fullName evidence="1">Potassium-transporting ATPase KdpC subunit</fullName>
    </recommendedName>
    <alternativeName>
        <fullName evidence="1">ATP phosphohydrolase [potassium-transporting] C chain</fullName>
    </alternativeName>
    <alternativeName>
        <fullName evidence="1">Potassium-binding and translocating subunit C</fullName>
    </alternativeName>
    <alternativeName>
        <fullName evidence="1">Potassium-translocating ATPase C chain</fullName>
    </alternativeName>
</protein>
<comment type="function">
    <text evidence="1">Part of the high-affinity ATP-driven potassium transport (or Kdp) system, which catalyzes the hydrolysis of ATP coupled with the electrogenic transport of potassium into the cytoplasm. This subunit acts as a catalytic chaperone that increases the ATP-binding affinity of the ATP-hydrolyzing subunit KdpB by the formation of a transient KdpB/KdpC/ATP ternary complex.</text>
</comment>
<comment type="subunit">
    <text evidence="1">The system is composed of three essential subunits: KdpA, KdpB and KdpC.</text>
</comment>
<comment type="subcellular location">
    <subcellularLocation>
        <location evidence="1">Cell inner membrane</location>
        <topology evidence="1">Single-pass membrane protein</topology>
    </subcellularLocation>
</comment>
<comment type="similarity">
    <text evidence="1">Belongs to the KdpC family.</text>
</comment>
<sequence length="189" mass="20649">MKTLFKSLKITLVFCVFFSVFYILILWLFAQVAGPNKGNAEVATLDGKVVGAANVGQMFTKDIYFWGRPSCAGDGYDASSSSGSNKGPTNPEYLAEVEARIDTFLVHHPYLSRKDVPAEMVTASASGLDPNITPQCAYVQVKRVAQARGLTENQVKEIVDQSVEKPLLGIFGTEKINVLKLNIALEENK</sequence>
<organism>
    <name type="scientific">Bacteroides thetaiotaomicron (strain ATCC 29148 / DSM 2079 / JCM 5827 / CCUG 10774 / NCTC 10582 / VPI-5482 / E50)</name>
    <dbReference type="NCBI Taxonomy" id="226186"/>
    <lineage>
        <taxon>Bacteria</taxon>
        <taxon>Pseudomonadati</taxon>
        <taxon>Bacteroidota</taxon>
        <taxon>Bacteroidia</taxon>
        <taxon>Bacteroidales</taxon>
        <taxon>Bacteroidaceae</taxon>
        <taxon>Bacteroides</taxon>
    </lineage>
</organism>